<keyword id="KW-0413">Isomerase</keyword>
<keyword id="KW-1185">Reference proteome</keyword>
<keyword id="KW-0819">tRNA processing</keyword>
<name>TRUB_GLUOX</name>
<sequence length="333" mass="36318">MGRKRGRDIDGWLILDKPLGPTSTDMVNKLRWAFDAKKAGHGGTLDPLASGVLPIAFGKATRTIPYIMDATKRYRFTLTFGESRTTDDLEGEVLATSPNRPTDDQIRAVLPALTGNVMQVPPVFSALRVGGERAYDMARAGRPPELPPRPARIDSITLVERPDANTAVFDVQSGKGVYMRSLARDIALACGTVGHISVLRRTKCGPFDLSHALTIDQISLDKSTQTVDNADALPAPLLDAATALVDIPALAVTDAEGRMLVWGQSIDPADLVHPLPASSQGEDHLWRAMIGEHVLGLCHVRHGRLRAARMLENHEFFGEHDVDYRRTPHGTDF</sequence>
<proteinExistence type="inferred from homology"/>
<gene>
    <name evidence="1" type="primary">truB</name>
    <name type="ordered locus">GOX1584</name>
</gene>
<comment type="function">
    <text evidence="1">Responsible for synthesis of pseudouridine from uracil-55 in the psi GC loop of transfer RNAs.</text>
</comment>
<comment type="catalytic activity">
    <reaction evidence="1">
        <text>uridine(55) in tRNA = pseudouridine(55) in tRNA</text>
        <dbReference type="Rhea" id="RHEA:42532"/>
        <dbReference type="Rhea" id="RHEA-COMP:10101"/>
        <dbReference type="Rhea" id="RHEA-COMP:10102"/>
        <dbReference type="ChEBI" id="CHEBI:65314"/>
        <dbReference type="ChEBI" id="CHEBI:65315"/>
        <dbReference type="EC" id="5.4.99.25"/>
    </reaction>
</comment>
<comment type="similarity">
    <text evidence="1">Belongs to the pseudouridine synthase TruB family. Type 1 subfamily.</text>
</comment>
<organism>
    <name type="scientific">Gluconobacter oxydans (strain 621H)</name>
    <name type="common">Gluconobacter suboxydans</name>
    <dbReference type="NCBI Taxonomy" id="290633"/>
    <lineage>
        <taxon>Bacteria</taxon>
        <taxon>Pseudomonadati</taxon>
        <taxon>Pseudomonadota</taxon>
        <taxon>Alphaproteobacteria</taxon>
        <taxon>Acetobacterales</taxon>
        <taxon>Acetobacteraceae</taxon>
        <taxon>Gluconobacter</taxon>
    </lineage>
</organism>
<reference key="1">
    <citation type="journal article" date="2005" name="Nat. Biotechnol.">
        <title>Complete genome sequence of the acetic acid bacterium Gluconobacter oxydans.</title>
        <authorList>
            <person name="Prust C."/>
            <person name="Hoffmeister M."/>
            <person name="Liesegang H."/>
            <person name="Wiezer A."/>
            <person name="Fricke W.F."/>
            <person name="Ehrenreich A."/>
            <person name="Gottschalk G."/>
            <person name="Deppenmeier U."/>
        </authorList>
    </citation>
    <scope>NUCLEOTIDE SEQUENCE [LARGE SCALE GENOMIC DNA]</scope>
    <source>
        <strain>621H</strain>
    </source>
</reference>
<protein>
    <recommendedName>
        <fullName evidence="1">tRNA pseudouridine synthase B</fullName>
        <ecNumber evidence="1">5.4.99.25</ecNumber>
    </recommendedName>
    <alternativeName>
        <fullName evidence="1">tRNA pseudouridine(55) synthase</fullName>
        <shortName evidence="1">Psi55 synthase</shortName>
    </alternativeName>
    <alternativeName>
        <fullName evidence="1">tRNA pseudouridylate synthase</fullName>
    </alternativeName>
    <alternativeName>
        <fullName evidence="1">tRNA-uridine isomerase</fullName>
    </alternativeName>
</protein>
<dbReference type="EC" id="5.4.99.25" evidence="1"/>
<dbReference type="EMBL" id="CP000009">
    <property type="protein sequence ID" value="AAW61325.1"/>
    <property type="molecule type" value="Genomic_DNA"/>
</dbReference>
<dbReference type="RefSeq" id="WP_011253109.1">
    <property type="nucleotide sequence ID" value="NC_006677.1"/>
</dbReference>
<dbReference type="SMR" id="Q5FQM1"/>
<dbReference type="STRING" id="290633.GOX1584"/>
<dbReference type="KEGG" id="gox:GOX1584"/>
<dbReference type="eggNOG" id="COG0130">
    <property type="taxonomic scope" value="Bacteria"/>
</dbReference>
<dbReference type="HOGENOM" id="CLU_032087_0_3_5"/>
<dbReference type="Proteomes" id="UP000006375">
    <property type="component" value="Chromosome"/>
</dbReference>
<dbReference type="GO" id="GO:0003723">
    <property type="term" value="F:RNA binding"/>
    <property type="evidence" value="ECO:0007669"/>
    <property type="project" value="InterPro"/>
</dbReference>
<dbReference type="GO" id="GO:0160148">
    <property type="term" value="F:tRNA pseudouridine(55) synthase activity"/>
    <property type="evidence" value="ECO:0007669"/>
    <property type="project" value="UniProtKB-EC"/>
</dbReference>
<dbReference type="GO" id="GO:1990481">
    <property type="term" value="P:mRNA pseudouridine synthesis"/>
    <property type="evidence" value="ECO:0007669"/>
    <property type="project" value="TreeGrafter"/>
</dbReference>
<dbReference type="GO" id="GO:0031119">
    <property type="term" value="P:tRNA pseudouridine synthesis"/>
    <property type="evidence" value="ECO:0007669"/>
    <property type="project" value="UniProtKB-UniRule"/>
</dbReference>
<dbReference type="CDD" id="cd02573">
    <property type="entry name" value="PseudoU_synth_EcTruB"/>
    <property type="match status" value="1"/>
</dbReference>
<dbReference type="Gene3D" id="3.30.2350.10">
    <property type="entry name" value="Pseudouridine synthase"/>
    <property type="match status" value="1"/>
</dbReference>
<dbReference type="HAMAP" id="MF_01080">
    <property type="entry name" value="TruB_bact"/>
    <property type="match status" value="1"/>
</dbReference>
<dbReference type="InterPro" id="IPR020103">
    <property type="entry name" value="PsdUridine_synth_cat_dom_sf"/>
</dbReference>
<dbReference type="InterPro" id="IPR002501">
    <property type="entry name" value="PsdUridine_synth_N"/>
</dbReference>
<dbReference type="InterPro" id="IPR014780">
    <property type="entry name" value="tRNA_psdUridine_synth_TruB"/>
</dbReference>
<dbReference type="InterPro" id="IPR032819">
    <property type="entry name" value="TruB_C"/>
</dbReference>
<dbReference type="NCBIfam" id="TIGR00431">
    <property type="entry name" value="TruB"/>
    <property type="match status" value="1"/>
</dbReference>
<dbReference type="PANTHER" id="PTHR13767:SF2">
    <property type="entry name" value="PSEUDOURIDYLATE SYNTHASE TRUB1"/>
    <property type="match status" value="1"/>
</dbReference>
<dbReference type="PANTHER" id="PTHR13767">
    <property type="entry name" value="TRNA-PSEUDOURIDINE SYNTHASE"/>
    <property type="match status" value="1"/>
</dbReference>
<dbReference type="Pfam" id="PF16198">
    <property type="entry name" value="TruB_C_2"/>
    <property type="match status" value="1"/>
</dbReference>
<dbReference type="Pfam" id="PF01509">
    <property type="entry name" value="TruB_N"/>
    <property type="match status" value="1"/>
</dbReference>
<dbReference type="SUPFAM" id="SSF55120">
    <property type="entry name" value="Pseudouridine synthase"/>
    <property type="match status" value="1"/>
</dbReference>
<evidence type="ECO:0000255" key="1">
    <source>
        <dbReference type="HAMAP-Rule" id="MF_01080"/>
    </source>
</evidence>
<feature type="chain" id="PRO_0000121841" description="tRNA pseudouridine synthase B">
    <location>
        <begin position="1"/>
        <end position="333"/>
    </location>
</feature>
<feature type="active site" description="Nucleophile" evidence="1">
    <location>
        <position position="46"/>
    </location>
</feature>
<accession>Q5FQM1</accession>